<organism>
    <name type="scientific">Schizosaccharomyces pombe (strain 972 / ATCC 24843)</name>
    <name type="common">Fission yeast</name>
    <dbReference type="NCBI Taxonomy" id="284812"/>
    <lineage>
        <taxon>Eukaryota</taxon>
        <taxon>Fungi</taxon>
        <taxon>Dikarya</taxon>
        <taxon>Ascomycota</taxon>
        <taxon>Taphrinomycotina</taxon>
        <taxon>Schizosaccharomycetes</taxon>
        <taxon>Schizosaccharomycetales</taxon>
        <taxon>Schizosaccharomycetaceae</taxon>
        <taxon>Schizosaccharomyces</taxon>
    </lineage>
</organism>
<protein>
    <recommendedName>
        <fullName>Uncharacterized protein C29B5.04c</fullName>
    </recommendedName>
</protein>
<accession>Q9HGP1</accession>
<accession>P78947</accession>
<sequence length="605" mass="68509">MFRSFGRLFRGSEESPTINDLTSITIYPQCFISTGKEYGSEPKHISVHVRGWVYENPDLNNLGRKDRLMLNLLRRYVGLPPKSKETGTYPEKDDENTNLQVVVDTKAQLNVNVNDGKPNDIELSSTSKTENDPPLSLHTTPDDLQGNGVNVPNPSLSASRSWYQSGYGISGFFNRIMTPSVNSQYISTIGLAKCEEYFEERSLASLQRGLKDEFVLVKIYATDKNFEQKVVAEFNVATNVEGYFIIDEVIPFYTTKNNKFSVEAVLLQSTSEDKVIKAYMSEVPVLDRNGISIISDIDDTVKNTRVIEGPRKVGETTLLAPLNTQTIEGVSDWFRVMTNLNATVHFVSNSPWQLWPTLSKFFTNDNMPYISSIYLRHFNGVLQNIIEPAAARKRSSLLTAIRSLGDRKIVLIGDNGEQDLQIYAEMAACFPERILGIFIRDVMSDFCGVLKKQTTKSNSLPEVVQTKPFATSTPDTPLKEFTTTLKDVDNEQASEFYQLEKEPDTVPSTFILHRYYTYRIFVEDRANKTRKPVVQVEHAASKLENVHILCDYCKHKCSNIMEQDWFVQLARARGVIPLHIPIVIWFNGEEPISFTEDLLKSAFAS</sequence>
<feature type="chain" id="PRO_0000350768" description="Uncharacterized protein C29B5.04c">
    <location>
        <begin position="1"/>
        <end position="605"/>
    </location>
</feature>
<feature type="region of interest" description="Disordered" evidence="1">
    <location>
        <begin position="111"/>
        <end position="151"/>
    </location>
</feature>
<feature type="sequence conflict" description="In Ref. 1; BAA12197." evidence="3" ref="1">
    <original>A</original>
    <variation>P</variation>
    <location>
        <position position="237"/>
    </location>
</feature>
<feature type="sequence conflict" description="In Ref. 1; BAA12197." evidence="3" ref="1">
    <original>VIKA</original>
    <variation>MITT</variation>
    <location>
        <begin position="275"/>
        <end position="278"/>
    </location>
</feature>
<feature type="sequence conflict" description="In Ref. 1; BAA12197." evidence="3" ref="1">
    <original>NT</original>
    <variation>KP</variation>
    <location>
        <begin position="303"/>
        <end position="304"/>
    </location>
</feature>
<comment type="subcellular location">
    <subcellularLocation>
        <location evidence="2">Golgi apparatus</location>
    </subcellularLocation>
</comment>
<comment type="sequence caution" evidence="3">
    <conflict type="frameshift">
        <sequence resource="EMBL-CDS" id="BAA12197"/>
    </conflict>
</comment>
<dbReference type="EMBL" id="D83993">
    <property type="protein sequence ID" value="BAA12197.1"/>
    <property type="status" value="ALT_FRAME"/>
    <property type="molecule type" value="Genomic_DNA"/>
</dbReference>
<dbReference type="EMBL" id="CU329671">
    <property type="protein sequence ID" value="CAC05513.1"/>
    <property type="molecule type" value="Genomic_DNA"/>
</dbReference>
<dbReference type="BioGRID" id="276840">
    <property type="interactions" value="12"/>
</dbReference>
<dbReference type="FunCoup" id="Q9HGP1">
    <property type="interactions" value="9"/>
</dbReference>
<dbReference type="STRING" id="284812.Q9HGP1"/>
<dbReference type="iPTMnet" id="Q9HGP1"/>
<dbReference type="PaxDb" id="4896-SPBC29B5.04c.1"/>
<dbReference type="EnsemblFungi" id="SPBC29B5.04c.1">
    <property type="protein sequence ID" value="SPBC29B5.04c.1:pep"/>
    <property type="gene ID" value="SPBC29B5.04c"/>
</dbReference>
<dbReference type="KEGG" id="spo:2540310"/>
<dbReference type="PomBase" id="SPBC29B5.04c"/>
<dbReference type="VEuPathDB" id="FungiDB:SPBC29B5.04c"/>
<dbReference type="eggNOG" id="ENOG502QT5E">
    <property type="taxonomic scope" value="Eukaryota"/>
</dbReference>
<dbReference type="HOGENOM" id="CLU_008292_0_0_1"/>
<dbReference type="InParanoid" id="Q9HGP1"/>
<dbReference type="OMA" id="NSPWQLW"/>
<dbReference type="PhylomeDB" id="Q9HGP1"/>
<dbReference type="PRO" id="PR:Q9HGP1"/>
<dbReference type="Proteomes" id="UP000002485">
    <property type="component" value="Chromosome II"/>
</dbReference>
<dbReference type="GO" id="GO:0030479">
    <property type="term" value="C:actin cortical patch"/>
    <property type="evidence" value="ECO:0000318"/>
    <property type="project" value="GO_Central"/>
</dbReference>
<dbReference type="GO" id="GO:0005794">
    <property type="term" value="C:Golgi apparatus"/>
    <property type="evidence" value="ECO:0007005"/>
    <property type="project" value="PomBase"/>
</dbReference>
<dbReference type="GO" id="GO:0008195">
    <property type="term" value="F:phosphatidate phosphatase activity"/>
    <property type="evidence" value="ECO:0000318"/>
    <property type="project" value="GO_Central"/>
</dbReference>
<dbReference type="GO" id="GO:0006629">
    <property type="term" value="P:lipid metabolic process"/>
    <property type="evidence" value="ECO:0000318"/>
    <property type="project" value="GO_Central"/>
</dbReference>
<dbReference type="InterPro" id="IPR017210">
    <property type="entry name" value="APP1"/>
</dbReference>
<dbReference type="InterPro" id="IPR019236">
    <property type="entry name" value="APP1_cat"/>
</dbReference>
<dbReference type="InterPro" id="IPR052935">
    <property type="entry name" value="Mg2+_PAP"/>
</dbReference>
<dbReference type="PANTHER" id="PTHR28208">
    <property type="entry name" value="PHOSPHATIDATE PHOSPHATASE APP1"/>
    <property type="match status" value="1"/>
</dbReference>
<dbReference type="PANTHER" id="PTHR28208:SF3">
    <property type="entry name" value="PHOSPHATIDATE PHOSPHATASE APP1"/>
    <property type="match status" value="1"/>
</dbReference>
<dbReference type="Pfam" id="PF09949">
    <property type="entry name" value="APP1_cat"/>
    <property type="match status" value="1"/>
</dbReference>
<dbReference type="PIRSF" id="PIRSF037464">
    <property type="entry name" value="UCP037464_APP1"/>
    <property type="match status" value="1"/>
</dbReference>
<name>YNK4_SCHPO</name>
<gene>
    <name type="ORF">SPBC29B5.04c</name>
</gene>
<evidence type="ECO:0000256" key="1">
    <source>
        <dbReference type="SAM" id="MobiDB-lite"/>
    </source>
</evidence>
<evidence type="ECO:0000269" key="2">
    <source>
    </source>
</evidence>
<evidence type="ECO:0000305" key="3"/>
<proteinExistence type="predicted"/>
<keyword id="KW-0333">Golgi apparatus</keyword>
<keyword id="KW-1185">Reference proteome</keyword>
<reference key="1">
    <citation type="submission" date="1996-03" db="EMBL/GenBank/DDBJ databases">
        <title>S.pombe chromosome II cosmid 1228 sequence.</title>
        <authorList>
            <person name="Kohnosu A."/>
            <person name="Niwa O."/>
            <person name="Yano M."/>
            <person name="Saitoh S."/>
            <person name="Katayama T."/>
            <person name="Nagao K."/>
            <person name="Yanagida M."/>
        </authorList>
    </citation>
    <scope>NUCLEOTIDE SEQUENCE [GENOMIC DNA]</scope>
    <source>
        <strain>972 / ATCC 24843</strain>
    </source>
</reference>
<reference key="2">
    <citation type="journal article" date="2002" name="Nature">
        <title>The genome sequence of Schizosaccharomyces pombe.</title>
        <authorList>
            <person name="Wood V."/>
            <person name="Gwilliam R."/>
            <person name="Rajandream M.A."/>
            <person name="Lyne M.H."/>
            <person name="Lyne R."/>
            <person name="Stewart A."/>
            <person name="Sgouros J.G."/>
            <person name="Peat N."/>
            <person name="Hayles J."/>
            <person name="Baker S.G."/>
            <person name="Basham D."/>
            <person name="Bowman S."/>
            <person name="Brooks K."/>
            <person name="Brown D."/>
            <person name="Brown S."/>
            <person name="Chillingworth T."/>
            <person name="Churcher C.M."/>
            <person name="Collins M."/>
            <person name="Connor R."/>
            <person name="Cronin A."/>
            <person name="Davis P."/>
            <person name="Feltwell T."/>
            <person name="Fraser A."/>
            <person name="Gentles S."/>
            <person name="Goble A."/>
            <person name="Hamlin N."/>
            <person name="Harris D.E."/>
            <person name="Hidalgo J."/>
            <person name="Hodgson G."/>
            <person name="Holroyd S."/>
            <person name="Hornsby T."/>
            <person name="Howarth S."/>
            <person name="Huckle E.J."/>
            <person name="Hunt S."/>
            <person name="Jagels K."/>
            <person name="James K.D."/>
            <person name="Jones L."/>
            <person name="Jones M."/>
            <person name="Leather S."/>
            <person name="McDonald S."/>
            <person name="McLean J."/>
            <person name="Mooney P."/>
            <person name="Moule S."/>
            <person name="Mungall K.L."/>
            <person name="Murphy L.D."/>
            <person name="Niblett D."/>
            <person name="Odell C."/>
            <person name="Oliver K."/>
            <person name="O'Neil S."/>
            <person name="Pearson D."/>
            <person name="Quail M.A."/>
            <person name="Rabbinowitsch E."/>
            <person name="Rutherford K.M."/>
            <person name="Rutter S."/>
            <person name="Saunders D."/>
            <person name="Seeger K."/>
            <person name="Sharp S."/>
            <person name="Skelton J."/>
            <person name="Simmonds M.N."/>
            <person name="Squares R."/>
            <person name="Squares S."/>
            <person name="Stevens K."/>
            <person name="Taylor K."/>
            <person name="Taylor R.G."/>
            <person name="Tivey A."/>
            <person name="Walsh S.V."/>
            <person name="Warren T."/>
            <person name="Whitehead S."/>
            <person name="Woodward J.R."/>
            <person name="Volckaert G."/>
            <person name="Aert R."/>
            <person name="Robben J."/>
            <person name="Grymonprez B."/>
            <person name="Weltjens I."/>
            <person name="Vanstreels E."/>
            <person name="Rieger M."/>
            <person name="Schaefer M."/>
            <person name="Mueller-Auer S."/>
            <person name="Gabel C."/>
            <person name="Fuchs M."/>
            <person name="Duesterhoeft A."/>
            <person name="Fritzc C."/>
            <person name="Holzer E."/>
            <person name="Moestl D."/>
            <person name="Hilbert H."/>
            <person name="Borzym K."/>
            <person name="Langer I."/>
            <person name="Beck A."/>
            <person name="Lehrach H."/>
            <person name="Reinhardt R."/>
            <person name="Pohl T.M."/>
            <person name="Eger P."/>
            <person name="Zimmermann W."/>
            <person name="Wedler H."/>
            <person name="Wambutt R."/>
            <person name="Purnelle B."/>
            <person name="Goffeau A."/>
            <person name="Cadieu E."/>
            <person name="Dreano S."/>
            <person name="Gloux S."/>
            <person name="Lelaure V."/>
            <person name="Mottier S."/>
            <person name="Galibert F."/>
            <person name="Aves S.J."/>
            <person name="Xiang Z."/>
            <person name="Hunt C."/>
            <person name="Moore K."/>
            <person name="Hurst S.M."/>
            <person name="Lucas M."/>
            <person name="Rochet M."/>
            <person name="Gaillardin C."/>
            <person name="Tallada V.A."/>
            <person name="Garzon A."/>
            <person name="Thode G."/>
            <person name="Daga R.R."/>
            <person name="Cruzado L."/>
            <person name="Jimenez J."/>
            <person name="Sanchez M."/>
            <person name="del Rey F."/>
            <person name="Benito J."/>
            <person name="Dominguez A."/>
            <person name="Revuelta J.L."/>
            <person name="Moreno S."/>
            <person name="Armstrong J."/>
            <person name="Forsburg S.L."/>
            <person name="Cerutti L."/>
            <person name="Lowe T."/>
            <person name="McCombie W.R."/>
            <person name="Paulsen I."/>
            <person name="Potashkin J."/>
            <person name="Shpakovski G.V."/>
            <person name="Ussery D."/>
            <person name="Barrell B.G."/>
            <person name="Nurse P."/>
        </authorList>
    </citation>
    <scope>NUCLEOTIDE SEQUENCE [LARGE SCALE GENOMIC DNA]</scope>
    <source>
        <strain>972 / ATCC 24843</strain>
    </source>
</reference>
<reference key="3">
    <citation type="journal article" date="2006" name="Nat. Biotechnol.">
        <title>ORFeome cloning and global analysis of protein localization in the fission yeast Schizosaccharomyces pombe.</title>
        <authorList>
            <person name="Matsuyama A."/>
            <person name="Arai R."/>
            <person name="Yashiroda Y."/>
            <person name="Shirai A."/>
            <person name="Kamata A."/>
            <person name="Sekido S."/>
            <person name="Kobayashi Y."/>
            <person name="Hashimoto A."/>
            <person name="Hamamoto M."/>
            <person name="Hiraoka Y."/>
            <person name="Horinouchi S."/>
            <person name="Yoshida M."/>
        </authorList>
    </citation>
    <scope>SUBCELLULAR LOCATION [LARGE SCALE ANALYSIS]</scope>
</reference>